<feature type="chain" id="PRO_0000191135" description="Chaperone protein ClpB">
    <location>
        <begin position="1"/>
        <end position="866"/>
    </location>
</feature>
<feature type="domain" description="Clp R" evidence="2">
    <location>
        <begin position="3"/>
        <end position="148"/>
    </location>
</feature>
<feature type="region of interest" description="Repeat 1" evidence="2">
    <location>
        <begin position="6"/>
        <end position="70"/>
    </location>
</feature>
<feature type="region of interest" description="Repeat 2" evidence="2">
    <location>
        <begin position="84"/>
        <end position="148"/>
    </location>
</feature>
<feature type="region of interest" description="NBD1" evidence="1">
    <location>
        <begin position="161"/>
        <end position="342"/>
    </location>
</feature>
<feature type="region of interest" description="Linker" evidence="1">
    <location>
        <begin position="343"/>
        <end position="551"/>
    </location>
</feature>
<feature type="region of interest" description="NBD2" evidence="1">
    <location>
        <begin position="561"/>
        <end position="772"/>
    </location>
</feature>
<feature type="region of interest" description="C-terminal" evidence="1">
    <location>
        <begin position="773"/>
        <end position="866"/>
    </location>
</feature>
<feature type="coiled-coil region" evidence="1">
    <location>
        <begin position="393"/>
        <end position="527"/>
    </location>
</feature>
<feature type="binding site" evidence="1">
    <location>
        <begin position="208"/>
        <end position="215"/>
    </location>
    <ligand>
        <name>ATP</name>
        <dbReference type="ChEBI" id="CHEBI:30616"/>
        <label>1</label>
    </ligand>
</feature>
<feature type="binding site" evidence="1">
    <location>
        <begin position="611"/>
        <end position="618"/>
    </location>
    <ligand>
        <name>ATP</name>
        <dbReference type="ChEBI" id="CHEBI:30616"/>
        <label>2</label>
    </ligand>
</feature>
<keyword id="KW-0067">ATP-binding</keyword>
<keyword id="KW-0143">Chaperone</keyword>
<keyword id="KW-0175">Coiled coil</keyword>
<keyword id="KW-0963">Cytoplasm</keyword>
<keyword id="KW-0547">Nucleotide-binding</keyword>
<keyword id="KW-0677">Repeat</keyword>
<keyword id="KW-0346">Stress response</keyword>
<accession>Q929G7</accession>
<sequence length="866" mass="97560">MDLQKFTQQVQQTIADAQNLAIASEHQEIDVIHVFKVLLTESDFAKRAYDVAEVNVEALQKVVDESLRKIPVVSGSGVNYGQAMSQALFQLMRDAEKEQKQLDDDFVSTEHLILAVMDQKSNPITVELKKQNKSKKQINEAILKIRGGKKVTSQNAEENYEALTKYGRDLVAEVRSGKLDPVIGRDAEIRNVIRILSRKTKNNPVLIGEPGVGKTAIVEGLAQRIVRKDVPEGLKDKTIISLDIGSLIAGAKYRGEFEERLKAVLQEVKQSDGQILLFIDEIHTIVGAGKTDGAMDAGNMLKPMLARGELHCIGATTLDEYRQYIEKDAALERRFQKVLVPEPTVEDTVSILRGLKERFEIHHGVNIHDNALVAAASLSNRYITDRFLPDKAIDLVDEACATIRVEIDSMPSELDEVTRKVMQLEIEEAALKEEKDPASERRLEMLQRELADYKEEANKMKSKWESEKSEISKIREVREQIDHLRHELEEAENNYDLNKAAELRHGKIPAVEKELLALETENREKTAQEDRILQEEVTENEIAEIVGRWTGIPVTKLVEGEREKLLKLADVLHQKVIGQDDAVQLVSDAVLRARAGIKDPKRPIGSFIFLGPTGVGKTELAKALAYNMFDSEDHMIRIDMSEYMEKHSVSRLVGAPPGYVGYEEGGQLTEAVRRNPYSIVLLDEIEKAHPDVFNILLQVLDDGRITDSQGRLIDFKNTVIIMTSNIGSNLLLERTEEGEISPELESDVMQILQSEFKPEFLNRVDDIILFKPLTLADIKGIVEKLVEELQIRLADQEITITISDNAKAFIAEEAYDPVYGARPLKRYIVRHVETPLAREIVSGKIMPHSSVEIDLQDKEFTFKVTE</sequence>
<proteinExistence type="inferred from homology"/>
<dbReference type="EMBL" id="AL596171">
    <property type="protein sequence ID" value="CAC97537.1"/>
    <property type="molecule type" value="Genomic_DNA"/>
</dbReference>
<dbReference type="PIR" id="AI1720">
    <property type="entry name" value="AI1720"/>
</dbReference>
<dbReference type="RefSeq" id="WP_010991121.1">
    <property type="nucleotide sequence ID" value="NC_003212.1"/>
</dbReference>
<dbReference type="SMR" id="Q929G7"/>
<dbReference type="STRING" id="272626.gene:17566671"/>
<dbReference type="KEGG" id="lin:clpB"/>
<dbReference type="eggNOG" id="COG0542">
    <property type="taxonomic scope" value="Bacteria"/>
</dbReference>
<dbReference type="HOGENOM" id="CLU_005070_4_0_9"/>
<dbReference type="OrthoDB" id="9803641at2"/>
<dbReference type="Proteomes" id="UP000002513">
    <property type="component" value="Chromosome"/>
</dbReference>
<dbReference type="GO" id="GO:0005737">
    <property type="term" value="C:cytoplasm"/>
    <property type="evidence" value="ECO:0007669"/>
    <property type="project" value="UniProtKB-SubCell"/>
</dbReference>
<dbReference type="GO" id="GO:0005524">
    <property type="term" value="F:ATP binding"/>
    <property type="evidence" value="ECO:0007669"/>
    <property type="project" value="UniProtKB-KW"/>
</dbReference>
<dbReference type="GO" id="GO:0016887">
    <property type="term" value="F:ATP hydrolysis activity"/>
    <property type="evidence" value="ECO:0007669"/>
    <property type="project" value="InterPro"/>
</dbReference>
<dbReference type="GO" id="GO:0034605">
    <property type="term" value="P:cellular response to heat"/>
    <property type="evidence" value="ECO:0007669"/>
    <property type="project" value="TreeGrafter"/>
</dbReference>
<dbReference type="GO" id="GO:0042026">
    <property type="term" value="P:protein refolding"/>
    <property type="evidence" value="ECO:0007669"/>
    <property type="project" value="InterPro"/>
</dbReference>
<dbReference type="CDD" id="cd00009">
    <property type="entry name" value="AAA"/>
    <property type="match status" value="1"/>
</dbReference>
<dbReference type="CDD" id="cd19499">
    <property type="entry name" value="RecA-like_ClpB_Hsp104-like"/>
    <property type="match status" value="1"/>
</dbReference>
<dbReference type="FunFam" id="1.10.8.60:FF:000017">
    <property type="entry name" value="ATP-dependent chaperone ClpB"/>
    <property type="match status" value="1"/>
</dbReference>
<dbReference type="FunFam" id="3.40.50.300:FF:000120">
    <property type="entry name" value="ATP-dependent chaperone ClpB"/>
    <property type="match status" value="1"/>
</dbReference>
<dbReference type="FunFam" id="3.40.50.300:FF:000025">
    <property type="entry name" value="ATP-dependent Clp protease subunit"/>
    <property type="match status" value="1"/>
</dbReference>
<dbReference type="FunFam" id="3.40.50.300:FF:000010">
    <property type="entry name" value="Chaperone clpB 1, putative"/>
    <property type="match status" value="1"/>
</dbReference>
<dbReference type="Gene3D" id="1.10.8.60">
    <property type="match status" value="1"/>
</dbReference>
<dbReference type="Gene3D" id="1.10.1780.10">
    <property type="entry name" value="Clp, N-terminal domain"/>
    <property type="match status" value="1"/>
</dbReference>
<dbReference type="Gene3D" id="3.40.50.300">
    <property type="entry name" value="P-loop containing nucleotide triphosphate hydrolases"/>
    <property type="match status" value="3"/>
</dbReference>
<dbReference type="InterPro" id="IPR003593">
    <property type="entry name" value="AAA+_ATPase"/>
</dbReference>
<dbReference type="InterPro" id="IPR003959">
    <property type="entry name" value="ATPase_AAA_core"/>
</dbReference>
<dbReference type="InterPro" id="IPR017730">
    <property type="entry name" value="Chaperonin_ClpB"/>
</dbReference>
<dbReference type="InterPro" id="IPR019489">
    <property type="entry name" value="Clp_ATPase_C"/>
</dbReference>
<dbReference type="InterPro" id="IPR036628">
    <property type="entry name" value="Clp_N_dom_sf"/>
</dbReference>
<dbReference type="InterPro" id="IPR004176">
    <property type="entry name" value="Clp_R_dom"/>
</dbReference>
<dbReference type="InterPro" id="IPR001270">
    <property type="entry name" value="ClpA/B"/>
</dbReference>
<dbReference type="InterPro" id="IPR018368">
    <property type="entry name" value="ClpA/B_CS1"/>
</dbReference>
<dbReference type="InterPro" id="IPR028299">
    <property type="entry name" value="ClpA/B_CS2"/>
</dbReference>
<dbReference type="InterPro" id="IPR041546">
    <property type="entry name" value="ClpA/ClpB_AAA_lid"/>
</dbReference>
<dbReference type="InterPro" id="IPR050130">
    <property type="entry name" value="ClpA_ClpB"/>
</dbReference>
<dbReference type="InterPro" id="IPR027417">
    <property type="entry name" value="P-loop_NTPase"/>
</dbReference>
<dbReference type="NCBIfam" id="TIGR03346">
    <property type="entry name" value="chaperone_ClpB"/>
    <property type="match status" value="1"/>
</dbReference>
<dbReference type="PANTHER" id="PTHR11638">
    <property type="entry name" value="ATP-DEPENDENT CLP PROTEASE"/>
    <property type="match status" value="1"/>
</dbReference>
<dbReference type="PANTHER" id="PTHR11638:SF18">
    <property type="entry name" value="HEAT SHOCK PROTEIN 104"/>
    <property type="match status" value="1"/>
</dbReference>
<dbReference type="Pfam" id="PF00004">
    <property type="entry name" value="AAA"/>
    <property type="match status" value="1"/>
</dbReference>
<dbReference type="Pfam" id="PF07724">
    <property type="entry name" value="AAA_2"/>
    <property type="match status" value="1"/>
</dbReference>
<dbReference type="Pfam" id="PF17871">
    <property type="entry name" value="AAA_lid_9"/>
    <property type="match status" value="1"/>
</dbReference>
<dbReference type="Pfam" id="PF02861">
    <property type="entry name" value="Clp_N"/>
    <property type="match status" value="2"/>
</dbReference>
<dbReference type="Pfam" id="PF10431">
    <property type="entry name" value="ClpB_D2-small"/>
    <property type="match status" value="1"/>
</dbReference>
<dbReference type="PRINTS" id="PR00300">
    <property type="entry name" value="CLPPROTEASEA"/>
</dbReference>
<dbReference type="SMART" id="SM00382">
    <property type="entry name" value="AAA"/>
    <property type="match status" value="2"/>
</dbReference>
<dbReference type="SMART" id="SM01086">
    <property type="entry name" value="ClpB_D2-small"/>
    <property type="match status" value="1"/>
</dbReference>
<dbReference type="SUPFAM" id="SSF81923">
    <property type="entry name" value="Double Clp-N motif"/>
    <property type="match status" value="1"/>
</dbReference>
<dbReference type="SUPFAM" id="SSF52540">
    <property type="entry name" value="P-loop containing nucleoside triphosphate hydrolases"/>
    <property type="match status" value="2"/>
</dbReference>
<dbReference type="PROSITE" id="PS51903">
    <property type="entry name" value="CLP_R"/>
    <property type="match status" value="1"/>
</dbReference>
<dbReference type="PROSITE" id="PS00870">
    <property type="entry name" value="CLPAB_1"/>
    <property type="match status" value="1"/>
</dbReference>
<dbReference type="PROSITE" id="PS00871">
    <property type="entry name" value="CLPAB_2"/>
    <property type="match status" value="1"/>
</dbReference>
<protein>
    <recommendedName>
        <fullName>Chaperone protein ClpB</fullName>
    </recommendedName>
</protein>
<organism>
    <name type="scientific">Listeria innocua serovar 6a (strain ATCC BAA-680 / CLIP 11262)</name>
    <dbReference type="NCBI Taxonomy" id="272626"/>
    <lineage>
        <taxon>Bacteria</taxon>
        <taxon>Bacillati</taxon>
        <taxon>Bacillota</taxon>
        <taxon>Bacilli</taxon>
        <taxon>Bacillales</taxon>
        <taxon>Listeriaceae</taxon>
        <taxon>Listeria</taxon>
    </lineage>
</organism>
<comment type="function">
    <text evidence="1">Part of a stress-induced multi-chaperone system, it is involved in the recovery of the cell from heat-induced damage, in cooperation with DnaK, DnaJ and GrpE. Acts before DnaK, in the processing of protein aggregates. Protein binding stimulates the ATPase activity; ATP hydrolysis unfolds the denatured protein aggregates, which probably helps expose new hydrophobic binding sites on the surface of ClpB-bound aggregates, contributing to the solubilization and refolding of denatured protein aggregates by DnaK (By similarity).</text>
</comment>
<comment type="subunit">
    <text evidence="1">Homohexamer. The oligomerization is ATP-dependent (By similarity).</text>
</comment>
<comment type="subcellular location">
    <subcellularLocation>
        <location evidence="3">Cytoplasm</location>
    </subcellularLocation>
</comment>
<comment type="domain">
    <text evidence="1">The Clp repeat (R) domain probably functions as a substrate-discriminating domain, recruiting aggregated proteins to the ClpB hexamer and/or stabilizing bound proteins. The NBD2 domain is responsible for oligomerization, whereas the NBD1 domain stabilizes the hexamer probably in an ATP-dependent manner. The movement of the coiled-coil domain is essential for ClpB ability to rescue proteins from an aggregated state, probably by pulling apart large aggregated proteins, which are bound between the coiled-coils motifs of adjacent ClpB subunits in the functional hexamer (By similarity).</text>
</comment>
<comment type="similarity">
    <text evidence="3">Belongs to the ClpA/ClpB family.</text>
</comment>
<gene>
    <name type="primary">clpB</name>
    <name type="ordered locus">lin2309</name>
</gene>
<reference key="1">
    <citation type="journal article" date="2001" name="Science">
        <title>Comparative genomics of Listeria species.</title>
        <authorList>
            <person name="Glaser P."/>
            <person name="Frangeul L."/>
            <person name="Buchrieser C."/>
            <person name="Rusniok C."/>
            <person name="Amend A."/>
            <person name="Baquero F."/>
            <person name="Berche P."/>
            <person name="Bloecker H."/>
            <person name="Brandt P."/>
            <person name="Chakraborty T."/>
            <person name="Charbit A."/>
            <person name="Chetouani F."/>
            <person name="Couve E."/>
            <person name="de Daruvar A."/>
            <person name="Dehoux P."/>
            <person name="Domann E."/>
            <person name="Dominguez-Bernal G."/>
            <person name="Duchaud E."/>
            <person name="Durant L."/>
            <person name="Dussurget O."/>
            <person name="Entian K.-D."/>
            <person name="Fsihi H."/>
            <person name="Garcia-del Portillo F."/>
            <person name="Garrido P."/>
            <person name="Gautier L."/>
            <person name="Goebel W."/>
            <person name="Gomez-Lopez N."/>
            <person name="Hain T."/>
            <person name="Hauf J."/>
            <person name="Jackson D."/>
            <person name="Jones L.-M."/>
            <person name="Kaerst U."/>
            <person name="Kreft J."/>
            <person name="Kuhn M."/>
            <person name="Kunst F."/>
            <person name="Kurapkat G."/>
            <person name="Madueno E."/>
            <person name="Maitournam A."/>
            <person name="Mata Vicente J."/>
            <person name="Ng E."/>
            <person name="Nedjari H."/>
            <person name="Nordsiek G."/>
            <person name="Novella S."/>
            <person name="de Pablos B."/>
            <person name="Perez-Diaz J.-C."/>
            <person name="Purcell R."/>
            <person name="Remmel B."/>
            <person name="Rose M."/>
            <person name="Schlueter T."/>
            <person name="Simoes N."/>
            <person name="Tierrez A."/>
            <person name="Vazquez-Boland J.-A."/>
            <person name="Voss H."/>
            <person name="Wehland J."/>
            <person name="Cossart P."/>
        </authorList>
    </citation>
    <scope>NUCLEOTIDE SEQUENCE [LARGE SCALE GENOMIC DNA]</scope>
    <source>
        <strain>ATCC BAA-680 / CLIP 11262</strain>
    </source>
</reference>
<name>CLPB_LISIN</name>
<evidence type="ECO:0000250" key="1"/>
<evidence type="ECO:0000255" key="2">
    <source>
        <dbReference type="PROSITE-ProRule" id="PRU01251"/>
    </source>
</evidence>
<evidence type="ECO:0000305" key="3"/>